<sequence length="155" mass="17971">MRRRKAPVREVLGDPVYGNKVVTKFINKMMFDGKKSVAEKIIYKAFNKIEEKSGEKGIEVFEKALERVRPLVEVRSRRVGGATYQVPVEVRASRQQSLSIRWILEATRKRNERMMVDRLANELMDAASDKGAAFKKKEDVHKMAEANKAFAHYRW</sequence>
<proteinExistence type="inferred from homology"/>
<evidence type="ECO:0000255" key="1">
    <source>
        <dbReference type="HAMAP-Rule" id="MF_00480"/>
    </source>
</evidence>
<evidence type="ECO:0000305" key="2"/>
<organism>
    <name type="scientific">Helicobacter pylori (strain HPAG1)</name>
    <dbReference type="NCBI Taxonomy" id="357544"/>
    <lineage>
        <taxon>Bacteria</taxon>
        <taxon>Pseudomonadati</taxon>
        <taxon>Campylobacterota</taxon>
        <taxon>Epsilonproteobacteria</taxon>
        <taxon>Campylobacterales</taxon>
        <taxon>Helicobacteraceae</taxon>
        <taxon>Helicobacter</taxon>
    </lineage>
</organism>
<keyword id="KW-0687">Ribonucleoprotein</keyword>
<keyword id="KW-0689">Ribosomal protein</keyword>
<keyword id="KW-0694">RNA-binding</keyword>
<keyword id="KW-0699">rRNA-binding</keyword>
<keyword id="KW-0820">tRNA-binding</keyword>
<dbReference type="EMBL" id="CP000241">
    <property type="protein sequence ID" value="ABF85202.1"/>
    <property type="molecule type" value="Genomic_DNA"/>
</dbReference>
<dbReference type="RefSeq" id="WP_001254357.1">
    <property type="nucleotide sequence ID" value="NC_008086.1"/>
</dbReference>
<dbReference type="SMR" id="Q1CS70"/>
<dbReference type="GeneID" id="31758828"/>
<dbReference type="KEGG" id="hpa:HPAG1_1135"/>
<dbReference type="HOGENOM" id="CLU_072226_1_1_7"/>
<dbReference type="GO" id="GO:0015935">
    <property type="term" value="C:small ribosomal subunit"/>
    <property type="evidence" value="ECO:0007669"/>
    <property type="project" value="InterPro"/>
</dbReference>
<dbReference type="GO" id="GO:0019843">
    <property type="term" value="F:rRNA binding"/>
    <property type="evidence" value="ECO:0007669"/>
    <property type="project" value="UniProtKB-UniRule"/>
</dbReference>
<dbReference type="GO" id="GO:0003735">
    <property type="term" value="F:structural constituent of ribosome"/>
    <property type="evidence" value="ECO:0007669"/>
    <property type="project" value="InterPro"/>
</dbReference>
<dbReference type="GO" id="GO:0000049">
    <property type="term" value="F:tRNA binding"/>
    <property type="evidence" value="ECO:0007669"/>
    <property type="project" value="UniProtKB-UniRule"/>
</dbReference>
<dbReference type="GO" id="GO:0006412">
    <property type="term" value="P:translation"/>
    <property type="evidence" value="ECO:0007669"/>
    <property type="project" value="UniProtKB-UniRule"/>
</dbReference>
<dbReference type="CDD" id="cd14869">
    <property type="entry name" value="uS7_Bacteria"/>
    <property type="match status" value="1"/>
</dbReference>
<dbReference type="FunFam" id="1.10.455.10:FF:000001">
    <property type="entry name" value="30S ribosomal protein S7"/>
    <property type="match status" value="1"/>
</dbReference>
<dbReference type="Gene3D" id="1.10.455.10">
    <property type="entry name" value="Ribosomal protein S7 domain"/>
    <property type="match status" value="1"/>
</dbReference>
<dbReference type="HAMAP" id="MF_00480_B">
    <property type="entry name" value="Ribosomal_uS7_B"/>
    <property type="match status" value="1"/>
</dbReference>
<dbReference type="InterPro" id="IPR000235">
    <property type="entry name" value="Ribosomal_uS7"/>
</dbReference>
<dbReference type="InterPro" id="IPR005717">
    <property type="entry name" value="Ribosomal_uS7_bac/org-type"/>
</dbReference>
<dbReference type="InterPro" id="IPR020606">
    <property type="entry name" value="Ribosomal_uS7_CS"/>
</dbReference>
<dbReference type="InterPro" id="IPR023798">
    <property type="entry name" value="Ribosomal_uS7_dom"/>
</dbReference>
<dbReference type="InterPro" id="IPR036823">
    <property type="entry name" value="Ribosomal_uS7_dom_sf"/>
</dbReference>
<dbReference type="NCBIfam" id="TIGR01029">
    <property type="entry name" value="rpsG_bact"/>
    <property type="match status" value="1"/>
</dbReference>
<dbReference type="PANTHER" id="PTHR11205">
    <property type="entry name" value="RIBOSOMAL PROTEIN S7"/>
    <property type="match status" value="1"/>
</dbReference>
<dbReference type="Pfam" id="PF00177">
    <property type="entry name" value="Ribosomal_S7"/>
    <property type="match status" value="1"/>
</dbReference>
<dbReference type="PIRSF" id="PIRSF002122">
    <property type="entry name" value="RPS7p_RPS7a_RPS5e_RPS7o"/>
    <property type="match status" value="1"/>
</dbReference>
<dbReference type="SUPFAM" id="SSF47973">
    <property type="entry name" value="Ribosomal protein S7"/>
    <property type="match status" value="1"/>
</dbReference>
<dbReference type="PROSITE" id="PS00052">
    <property type="entry name" value="RIBOSOMAL_S7"/>
    <property type="match status" value="1"/>
</dbReference>
<comment type="function">
    <text evidence="1">One of the primary rRNA binding proteins, it binds directly to 16S rRNA where it nucleates assembly of the head domain of the 30S subunit. Is located at the subunit interface close to the decoding center, probably blocks exit of the E-site tRNA.</text>
</comment>
<comment type="subunit">
    <text evidence="1">Part of the 30S ribosomal subunit. Contacts proteins S9 and S11.</text>
</comment>
<comment type="similarity">
    <text evidence="1">Belongs to the universal ribosomal protein uS7 family.</text>
</comment>
<gene>
    <name evidence="1" type="primary">rpsG</name>
    <name type="ordered locus">HPAG1_1135</name>
</gene>
<reference key="1">
    <citation type="journal article" date="2006" name="Proc. Natl. Acad. Sci. U.S.A.">
        <title>The complete genome sequence of a chronic atrophic gastritis Helicobacter pylori strain: evolution during disease progression.</title>
        <authorList>
            <person name="Oh J.D."/>
            <person name="Kling-Baeckhed H."/>
            <person name="Giannakis M."/>
            <person name="Xu J."/>
            <person name="Fulton R.S."/>
            <person name="Fulton L.A."/>
            <person name="Cordum H.S."/>
            <person name="Wang C."/>
            <person name="Elliott G."/>
            <person name="Edwards J."/>
            <person name="Mardis E.R."/>
            <person name="Engstrand L.G."/>
            <person name="Gordon J.I."/>
        </authorList>
    </citation>
    <scope>NUCLEOTIDE SEQUENCE [LARGE SCALE GENOMIC DNA]</scope>
    <source>
        <strain>HPAG1</strain>
    </source>
</reference>
<name>RS7_HELPH</name>
<accession>Q1CS70</accession>
<feature type="chain" id="PRO_1000014205" description="Small ribosomal subunit protein uS7">
    <location>
        <begin position="1"/>
        <end position="155"/>
    </location>
</feature>
<protein>
    <recommendedName>
        <fullName evidence="1">Small ribosomal subunit protein uS7</fullName>
    </recommendedName>
    <alternativeName>
        <fullName evidence="2">30S ribosomal protein S7</fullName>
    </alternativeName>
</protein>